<proteinExistence type="inferred from homology"/>
<sequence length="635" mass="72606">MINISLSDGSVRQFEKGMTIYEVANAISMSLAKQAIVAEINGELKDLSTVIENNCKLRILTAKDPECLEIIRHDAAHLTAEAVKELFPETQVTIGPAIENGYYYDFARDKPFTVDDLAVIEAKMQELAKKNEKVTRELWNRDKAIEFFRSIGEHYKAEIIASIPTDEPITLYRQGNFIDLCRGPHAPSTGFVKYFKLMKVAGSYWRGDSRNQVLQRIYGTAWATKEQLDHYLFMLEEAEKRDHRKLGRELDLFHFQEEAQGMVFWHDKGWSIYNIVEQYIRKKIRKNGYTEVKTPVLVDKRLWEASGHWEKFRDNMFALEADNKILALKPMNCPCHVQIFKQGIKSYRDLPLRMSEFGLCHRNEASGALHGLMRVRSLVQDDAHIFCAEEQITDETVSFCKLLTEVYKDFGFTDIKVKFSDRPEIRAGSDEVWDKAENALKEAVEKAGFTYTLNPGEGAFYGPKLEFVLTDAIGRQWQCGTLQMDFVLLEQLDASYVAASGEKKRPVMLHRAILGSLERFIGILIEEYAGCFPLWLAPVQVAIATITSDLNDYALAVQKALIDNGVRTDINISPDKINYKIREFSNHKVPLIAIIGKKEKENKQVTIRRLGTTDQQVLSVKQLITLISEENSKYL</sequence>
<keyword id="KW-0030">Aminoacyl-tRNA synthetase</keyword>
<keyword id="KW-0067">ATP-binding</keyword>
<keyword id="KW-0963">Cytoplasm</keyword>
<keyword id="KW-0436">Ligase</keyword>
<keyword id="KW-0479">Metal-binding</keyword>
<keyword id="KW-0547">Nucleotide-binding</keyword>
<keyword id="KW-0648">Protein biosynthesis</keyword>
<keyword id="KW-0694">RNA-binding</keyword>
<keyword id="KW-0820">tRNA-binding</keyword>
<keyword id="KW-0862">Zinc</keyword>
<dbReference type="EC" id="6.1.1.3" evidence="1"/>
<dbReference type="EMBL" id="CP000409">
    <property type="protein sequence ID" value="ABV73198.1"/>
    <property type="molecule type" value="Genomic_DNA"/>
</dbReference>
<dbReference type="RefSeq" id="WP_012148397.1">
    <property type="nucleotide sequence ID" value="NC_009879.1"/>
</dbReference>
<dbReference type="SMR" id="A8EXW5"/>
<dbReference type="STRING" id="293613.A1E_01265"/>
<dbReference type="KEGG" id="rcm:A1E_01265"/>
<dbReference type="eggNOG" id="COG0441">
    <property type="taxonomic scope" value="Bacteria"/>
</dbReference>
<dbReference type="HOGENOM" id="CLU_008554_0_1_5"/>
<dbReference type="Proteomes" id="UP000007056">
    <property type="component" value="Chromosome"/>
</dbReference>
<dbReference type="GO" id="GO:0005737">
    <property type="term" value="C:cytoplasm"/>
    <property type="evidence" value="ECO:0007669"/>
    <property type="project" value="UniProtKB-SubCell"/>
</dbReference>
<dbReference type="GO" id="GO:0005524">
    <property type="term" value="F:ATP binding"/>
    <property type="evidence" value="ECO:0007669"/>
    <property type="project" value="UniProtKB-UniRule"/>
</dbReference>
<dbReference type="GO" id="GO:0046872">
    <property type="term" value="F:metal ion binding"/>
    <property type="evidence" value="ECO:0007669"/>
    <property type="project" value="UniProtKB-KW"/>
</dbReference>
<dbReference type="GO" id="GO:0004829">
    <property type="term" value="F:threonine-tRNA ligase activity"/>
    <property type="evidence" value="ECO:0007669"/>
    <property type="project" value="UniProtKB-UniRule"/>
</dbReference>
<dbReference type="GO" id="GO:0000049">
    <property type="term" value="F:tRNA binding"/>
    <property type="evidence" value="ECO:0007669"/>
    <property type="project" value="UniProtKB-KW"/>
</dbReference>
<dbReference type="GO" id="GO:0006435">
    <property type="term" value="P:threonyl-tRNA aminoacylation"/>
    <property type="evidence" value="ECO:0007669"/>
    <property type="project" value="UniProtKB-UniRule"/>
</dbReference>
<dbReference type="CDD" id="cd01667">
    <property type="entry name" value="TGS_ThrRS"/>
    <property type="match status" value="1"/>
</dbReference>
<dbReference type="CDD" id="cd00860">
    <property type="entry name" value="ThrRS_anticodon"/>
    <property type="match status" value="1"/>
</dbReference>
<dbReference type="CDD" id="cd00771">
    <property type="entry name" value="ThrRS_core"/>
    <property type="match status" value="1"/>
</dbReference>
<dbReference type="FunFam" id="3.10.20.30:FF:000005">
    <property type="entry name" value="Threonine--tRNA ligase"/>
    <property type="match status" value="1"/>
</dbReference>
<dbReference type="FunFam" id="3.30.54.20:FF:000002">
    <property type="entry name" value="Threonine--tRNA ligase"/>
    <property type="match status" value="1"/>
</dbReference>
<dbReference type="FunFam" id="3.30.930.10:FF:000002">
    <property type="entry name" value="Threonine--tRNA ligase"/>
    <property type="match status" value="1"/>
</dbReference>
<dbReference type="FunFam" id="3.40.50.800:FF:000001">
    <property type="entry name" value="Threonine--tRNA ligase"/>
    <property type="match status" value="1"/>
</dbReference>
<dbReference type="FunFam" id="3.30.980.10:FF:000005">
    <property type="entry name" value="Threonyl-tRNA synthetase, mitochondrial"/>
    <property type="match status" value="1"/>
</dbReference>
<dbReference type="Gene3D" id="3.10.20.30">
    <property type="match status" value="1"/>
</dbReference>
<dbReference type="Gene3D" id="3.30.54.20">
    <property type="match status" value="1"/>
</dbReference>
<dbReference type="Gene3D" id="3.40.50.800">
    <property type="entry name" value="Anticodon-binding domain"/>
    <property type="match status" value="1"/>
</dbReference>
<dbReference type="Gene3D" id="3.30.930.10">
    <property type="entry name" value="Bira Bifunctional Protein, Domain 2"/>
    <property type="match status" value="1"/>
</dbReference>
<dbReference type="Gene3D" id="3.30.980.10">
    <property type="entry name" value="Threonyl-trna Synthetase, Chain A, domain 2"/>
    <property type="match status" value="1"/>
</dbReference>
<dbReference type="HAMAP" id="MF_00184">
    <property type="entry name" value="Thr_tRNA_synth"/>
    <property type="match status" value="1"/>
</dbReference>
<dbReference type="InterPro" id="IPR002314">
    <property type="entry name" value="aa-tRNA-synt_IIb"/>
</dbReference>
<dbReference type="InterPro" id="IPR006195">
    <property type="entry name" value="aa-tRNA-synth_II"/>
</dbReference>
<dbReference type="InterPro" id="IPR045864">
    <property type="entry name" value="aa-tRNA-synth_II/BPL/LPL"/>
</dbReference>
<dbReference type="InterPro" id="IPR004154">
    <property type="entry name" value="Anticodon-bd"/>
</dbReference>
<dbReference type="InterPro" id="IPR036621">
    <property type="entry name" value="Anticodon-bd_dom_sf"/>
</dbReference>
<dbReference type="InterPro" id="IPR012675">
    <property type="entry name" value="Beta-grasp_dom_sf"/>
</dbReference>
<dbReference type="InterPro" id="IPR004095">
    <property type="entry name" value="TGS"/>
</dbReference>
<dbReference type="InterPro" id="IPR012676">
    <property type="entry name" value="TGS-like"/>
</dbReference>
<dbReference type="InterPro" id="IPR002320">
    <property type="entry name" value="Thr-tRNA-ligase_IIa"/>
</dbReference>
<dbReference type="InterPro" id="IPR018163">
    <property type="entry name" value="Thr/Ala-tRNA-synth_IIc_edit"/>
</dbReference>
<dbReference type="InterPro" id="IPR047246">
    <property type="entry name" value="ThrRS_anticodon"/>
</dbReference>
<dbReference type="InterPro" id="IPR033728">
    <property type="entry name" value="ThrRS_core"/>
</dbReference>
<dbReference type="InterPro" id="IPR012947">
    <property type="entry name" value="tRNA_SAD"/>
</dbReference>
<dbReference type="NCBIfam" id="TIGR00418">
    <property type="entry name" value="thrS"/>
    <property type="match status" value="1"/>
</dbReference>
<dbReference type="PANTHER" id="PTHR11451:SF44">
    <property type="entry name" value="THREONINE--TRNA LIGASE, CHLOROPLASTIC_MITOCHONDRIAL 2"/>
    <property type="match status" value="1"/>
</dbReference>
<dbReference type="PANTHER" id="PTHR11451">
    <property type="entry name" value="THREONINE-TRNA LIGASE"/>
    <property type="match status" value="1"/>
</dbReference>
<dbReference type="Pfam" id="PF03129">
    <property type="entry name" value="HGTP_anticodon"/>
    <property type="match status" value="1"/>
</dbReference>
<dbReference type="Pfam" id="PF02824">
    <property type="entry name" value="TGS"/>
    <property type="match status" value="1"/>
</dbReference>
<dbReference type="Pfam" id="PF00587">
    <property type="entry name" value="tRNA-synt_2b"/>
    <property type="match status" value="1"/>
</dbReference>
<dbReference type="Pfam" id="PF07973">
    <property type="entry name" value="tRNA_SAD"/>
    <property type="match status" value="1"/>
</dbReference>
<dbReference type="PRINTS" id="PR01047">
    <property type="entry name" value="TRNASYNTHTHR"/>
</dbReference>
<dbReference type="SMART" id="SM00863">
    <property type="entry name" value="tRNA_SAD"/>
    <property type="match status" value="1"/>
</dbReference>
<dbReference type="SUPFAM" id="SSF52954">
    <property type="entry name" value="Class II aaRS ABD-related"/>
    <property type="match status" value="1"/>
</dbReference>
<dbReference type="SUPFAM" id="SSF55681">
    <property type="entry name" value="Class II aaRS and biotin synthetases"/>
    <property type="match status" value="1"/>
</dbReference>
<dbReference type="SUPFAM" id="SSF81271">
    <property type="entry name" value="TGS-like"/>
    <property type="match status" value="1"/>
</dbReference>
<dbReference type="SUPFAM" id="SSF55186">
    <property type="entry name" value="ThrRS/AlaRS common domain"/>
    <property type="match status" value="1"/>
</dbReference>
<dbReference type="PROSITE" id="PS50862">
    <property type="entry name" value="AA_TRNA_LIGASE_II"/>
    <property type="match status" value="1"/>
</dbReference>
<dbReference type="PROSITE" id="PS51880">
    <property type="entry name" value="TGS"/>
    <property type="match status" value="1"/>
</dbReference>
<protein>
    <recommendedName>
        <fullName evidence="1">Threonine--tRNA ligase</fullName>
        <ecNumber evidence="1">6.1.1.3</ecNumber>
    </recommendedName>
    <alternativeName>
        <fullName evidence="1">Threonyl-tRNA synthetase</fullName>
        <shortName evidence="1">ThrRS</shortName>
    </alternativeName>
</protein>
<evidence type="ECO:0000255" key="1">
    <source>
        <dbReference type="HAMAP-Rule" id="MF_00184"/>
    </source>
</evidence>
<evidence type="ECO:0000255" key="2">
    <source>
        <dbReference type="PROSITE-ProRule" id="PRU01228"/>
    </source>
</evidence>
<comment type="function">
    <text evidence="1">Catalyzes the attachment of threonine to tRNA(Thr) in a two-step reaction: L-threonine is first activated by ATP to form Thr-AMP and then transferred to the acceptor end of tRNA(Thr). Also edits incorrectly charged L-seryl-tRNA(Thr).</text>
</comment>
<comment type="catalytic activity">
    <reaction evidence="1">
        <text>tRNA(Thr) + L-threonine + ATP = L-threonyl-tRNA(Thr) + AMP + diphosphate + H(+)</text>
        <dbReference type="Rhea" id="RHEA:24624"/>
        <dbReference type="Rhea" id="RHEA-COMP:9670"/>
        <dbReference type="Rhea" id="RHEA-COMP:9704"/>
        <dbReference type="ChEBI" id="CHEBI:15378"/>
        <dbReference type="ChEBI" id="CHEBI:30616"/>
        <dbReference type="ChEBI" id="CHEBI:33019"/>
        <dbReference type="ChEBI" id="CHEBI:57926"/>
        <dbReference type="ChEBI" id="CHEBI:78442"/>
        <dbReference type="ChEBI" id="CHEBI:78534"/>
        <dbReference type="ChEBI" id="CHEBI:456215"/>
        <dbReference type="EC" id="6.1.1.3"/>
    </reaction>
</comment>
<comment type="cofactor">
    <cofactor evidence="1">
        <name>Zn(2+)</name>
        <dbReference type="ChEBI" id="CHEBI:29105"/>
    </cofactor>
    <text evidence="1">Binds 1 zinc ion per subunit.</text>
</comment>
<comment type="subunit">
    <text evidence="1">Homodimer.</text>
</comment>
<comment type="subcellular location">
    <subcellularLocation>
        <location evidence="1">Cytoplasm</location>
    </subcellularLocation>
</comment>
<comment type="similarity">
    <text evidence="1">Belongs to the class-II aminoacyl-tRNA synthetase family.</text>
</comment>
<gene>
    <name evidence="1" type="primary">thrS</name>
    <name type="ordered locus">A1E_01265</name>
</gene>
<organism>
    <name type="scientific">Rickettsia canadensis (strain McKiel)</name>
    <dbReference type="NCBI Taxonomy" id="293613"/>
    <lineage>
        <taxon>Bacteria</taxon>
        <taxon>Pseudomonadati</taxon>
        <taxon>Pseudomonadota</taxon>
        <taxon>Alphaproteobacteria</taxon>
        <taxon>Rickettsiales</taxon>
        <taxon>Rickettsiaceae</taxon>
        <taxon>Rickettsieae</taxon>
        <taxon>Rickettsia</taxon>
        <taxon>belli group</taxon>
    </lineage>
</organism>
<name>SYT_RICCK</name>
<reference key="1">
    <citation type="submission" date="2007-09" db="EMBL/GenBank/DDBJ databases">
        <title>Complete genome sequence of Rickettsia canadensis.</title>
        <authorList>
            <person name="Madan A."/>
            <person name="Fahey J."/>
            <person name="Helton E."/>
            <person name="Ketteman M."/>
            <person name="Madan A."/>
            <person name="Rodrigues S."/>
            <person name="Sanchez A."/>
            <person name="Whiting M."/>
            <person name="Dasch G."/>
            <person name="Eremeeva M."/>
        </authorList>
    </citation>
    <scope>NUCLEOTIDE SEQUENCE [LARGE SCALE GENOMIC DNA]</scope>
    <source>
        <strain>McKiel</strain>
    </source>
</reference>
<accession>A8EXW5</accession>
<feature type="chain" id="PRO_1000020495" description="Threonine--tRNA ligase">
    <location>
        <begin position="1"/>
        <end position="635"/>
    </location>
</feature>
<feature type="domain" description="TGS" evidence="2">
    <location>
        <begin position="1"/>
        <end position="61"/>
    </location>
</feature>
<feature type="region of interest" description="Catalytic" evidence="1">
    <location>
        <begin position="242"/>
        <end position="533"/>
    </location>
</feature>
<feature type="binding site" evidence="1">
    <location>
        <position position="333"/>
    </location>
    <ligand>
        <name>Zn(2+)</name>
        <dbReference type="ChEBI" id="CHEBI:29105"/>
    </ligand>
</feature>
<feature type="binding site" evidence="1">
    <location>
        <position position="384"/>
    </location>
    <ligand>
        <name>Zn(2+)</name>
        <dbReference type="ChEBI" id="CHEBI:29105"/>
    </ligand>
</feature>
<feature type="binding site" evidence="1">
    <location>
        <position position="510"/>
    </location>
    <ligand>
        <name>Zn(2+)</name>
        <dbReference type="ChEBI" id="CHEBI:29105"/>
    </ligand>
</feature>